<protein>
    <recommendedName>
        <fullName>Ribonuclease alpha-sarcin</fullName>
        <ecNumber evidence="5">4.6.1.23</ecNumber>
    </recommendedName>
    <alternativeName>
        <fullName>rRNA endonuclease</fullName>
    </alternativeName>
</protein>
<name>RNAS_ASPGI</name>
<accession>P00655</accession>
<feature type="signal peptide" evidence="4">
    <location>
        <begin position="1"/>
        <end position="27"/>
    </location>
</feature>
<feature type="chain" id="PRO_0000030836" description="Ribonuclease alpha-sarcin">
    <location>
        <begin position="28"/>
        <end position="177"/>
    </location>
</feature>
<feature type="region of interest" description="Disordered" evidence="2">
    <location>
        <begin position="86"/>
        <end position="119"/>
    </location>
</feature>
<feature type="compositionally biased region" description="Basic and acidic residues" evidence="2">
    <location>
        <begin position="99"/>
        <end position="119"/>
    </location>
</feature>
<feature type="active site">
    <location>
        <position position="77"/>
    </location>
</feature>
<feature type="active site" description="Proton acceptor">
    <location>
        <position position="123"/>
    </location>
</feature>
<feature type="active site" description="Proton donor">
    <location>
        <position position="164"/>
    </location>
</feature>
<feature type="disulfide bond">
    <location>
        <begin position="33"/>
        <end position="175"/>
    </location>
</feature>
<feature type="disulfide bond">
    <location>
        <begin position="103"/>
        <end position="159"/>
    </location>
</feature>
<feature type="strand" evidence="6">
    <location>
        <begin position="30"/>
        <end position="39"/>
    </location>
</feature>
<feature type="turn" evidence="6">
    <location>
        <begin position="40"/>
        <end position="43"/>
    </location>
</feature>
<feature type="strand" evidence="6">
    <location>
        <begin position="44"/>
        <end position="53"/>
    </location>
</feature>
<feature type="helix" evidence="6">
    <location>
        <begin position="54"/>
        <end position="60"/>
    </location>
</feature>
<feature type="turn" evidence="6">
    <location>
        <begin position="61"/>
        <end position="63"/>
    </location>
</feature>
<feature type="strand" evidence="7">
    <location>
        <begin position="66"/>
        <end position="69"/>
    </location>
</feature>
<feature type="strand" evidence="7">
    <location>
        <begin position="71"/>
        <end position="73"/>
    </location>
</feature>
<feature type="strand" evidence="6">
    <location>
        <begin position="76"/>
        <end position="78"/>
    </location>
</feature>
<feature type="strand" evidence="6">
    <location>
        <begin position="85"/>
        <end position="87"/>
    </location>
</feature>
<feature type="turn" evidence="6">
    <location>
        <begin position="101"/>
        <end position="103"/>
    </location>
</feature>
<feature type="strand" evidence="6">
    <location>
        <begin position="111"/>
        <end position="113"/>
    </location>
</feature>
<feature type="strand" evidence="6">
    <location>
        <begin position="115"/>
        <end position="117"/>
    </location>
</feature>
<feature type="strand" evidence="6">
    <location>
        <begin position="122"/>
        <end position="124"/>
    </location>
</feature>
<feature type="strand" evidence="7">
    <location>
        <begin position="134"/>
        <end position="136"/>
    </location>
</feature>
<feature type="strand" evidence="6">
    <location>
        <begin position="146"/>
        <end position="151"/>
    </location>
</feature>
<feature type="strand" evidence="6">
    <location>
        <begin position="153"/>
        <end position="155"/>
    </location>
</feature>
<feature type="strand" evidence="6">
    <location>
        <begin position="158"/>
        <end position="166"/>
    </location>
</feature>
<feature type="turn" evidence="6">
    <location>
        <begin position="167"/>
        <end position="169"/>
    </location>
</feature>
<feature type="strand" evidence="6">
    <location>
        <begin position="172"/>
        <end position="174"/>
    </location>
</feature>
<keyword id="KW-0002">3D-structure</keyword>
<keyword id="KW-0903">Direct protein sequencing</keyword>
<keyword id="KW-1015">Disulfide bond</keyword>
<keyword id="KW-0378">Hydrolase</keyword>
<keyword id="KW-0456">Lyase</keyword>
<keyword id="KW-0540">Nuclease</keyword>
<keyword id="KW-0652">Protein synthesis inhibitor</keyword>
<keyword id="KW-0964">Secreted</keyword>
<keyword id="KW-0732">Signal</keyword>
<reference key="1">
    <citation type="journal article" date="1990" name="Nucleic Acids Res.">
        <title>Complete nucleotide sequence of cDNA for the cytotoxin alpha sarcin.</title>
        <authorList>
            <person name="Oka T."/>
            <person name="Natori Y."/>
            <person name="Tanaka S."/>
            <person name="Tsurugi K."/>
            <person name="Endo Y."/>
        </authorList>
    </citation>
    <scope>NUCLEOTIDE SEQUENCE [MRNA]</scope>
    <source>
        <strain>MDH 18894</strain>
    </source>
</reference>
<reference key="2">
    <citation type="submission" date="1991-06" db="EMBL/GenBank/DDBJ databases">
        <authorList>
            <person name="Wnendt S."/>
            <person name="Felske H."/>
            <person name="Henze P.P."/>
            <person name="Ulbrich N."/>
            <person name="Stahl U."/>
        </authorList>
    </citation>
    <scope>NUCLEOTIDE SEQUENCE [GENOMIC DNA]</scope>
    <source>
        <strain>MDH 18894</strain>
    </source>
</reference>
<reference key="3">
    <citation type="journal article" date="1983" name="J. Biol. Chem.">
        <title>The primary structure of the cytotoxin alpha-sarcin.</title>
        <authorList>
            <person name="Sacco G."/>
            <person name="Drickamer K."/>
            <person name="Wool I.G."/>
        </authorList>
    </citation>
    <scope>PROTEIN SEQUENCE OF 28-177</scope>
</reference>
<reference key="4">
    <citation type="journal article" date="1989" name="Biochem. J.">
        <title>Effect of alpha-sarcin and ribosome-inactivating proteins on the interaction of elongation factors with ribosomes.</title>
        <authorList>
            <person name="Brigotti M."/>
            <person name="Rambelli F."/>
            <person name="Zamboni M."/>
            <person name="Montanaro L."/>
            <person name="Sperti S."/>
        </authorList>
    </citation>
    <scope>FUNCTION</scope>
</reference>
<reference key="5">
    <citation type="journal article" date="2000" name="J. Mol. Biol.">
        <title>The highly refined solution structure of the cytotoxic ribonuclease alpha-sarcin reveals the structural requirements for substrate recognition and ribonucleolytic activity.</title>
        <authorList>
            <person name="Perez-Canadillas J.M."/>
            <person name="Santoro J."/>
            <person name="Campos-Olivas R."/>
            <person name="Lacadena J."/>
            <person name="Martinez del Pozo A."/>
            <person name="Gavilanes J.G."/>
            <person name="Rico M."/>
            <person name="Bruix M."/>
        </authorList>
    </citation>
    <scope>STRUCTURE BY NMR OF 28-177</scope>
</reference>
<proteinExistence type="evidence at protein level"/>
<sequence>MVAIKNLVLVALTAVTALAVPSPLEARAVTWTCLNDQKNPKTNKYETKRLLYNQNKAESNSHHAPLSDGKTGSSYPHWFTNGYDGDGKLPKGRTPIKFGKSDCDRPPKHSKDGNGKTDHYLLEFPTFPDGHDYKFDSKKPKENPGPARVIYTYPNKVFCGIIAHTKENQGELKLCSH</sequence>
<dbReference type="EC" id="4.6.1.23" evidence="5"/>
<dbReference type="EMBL" id="D13704">
    <property type="protein sequence ID" value="BAA02863.1"/>
    <property type="molecule type" value="mRNA"/>
</dbReference>
<dbReference type="EMBL" id="X60770">
    <property type="protein sequence ID" value="CAA43180.1"/>
    <property type="molecule type" value="Genomic_DNA"/>
</dbReference>
<dbReference type="PIR" id="JU0138">
    <property type="entry name" value="NRASSG"/>
</dbReference>
<dbReference type="PDB" id="1DE3">
    <property type="method" value="NMR"/>
    <property type="chains" value="A=28-177"/>
</dbReference>
<dbReference type="PDB" id="1R4Y">
    <property type="method" value="NMR"/>
    <property type="chains" value="A=28-177"/>
</dbReference>
<dbReference type="PDBsum" id="1DE3"/>
<dbReference type="PDBsum" id="1R4Y"/>
<dbReference type="BMRB" id="P00655"/>
<dbReference type="SMR" id="P00655"/>
<dbReference type="KEGG" id="ag:BAA02863"/>
<dbReference type="BRENDA" id="4.6.1.23">
    <property type="organism ID" value="510"/>
</dbReference>
<dbReference type="EvolutionaryTrace" id="P00655"/>
<dbReference type="GO" id="GO:0005576">
    <property type="term" value="C:extracellular region"/>
    <property type="evidence" value="ECO:0007669"/>
    <property type="project" value="UniProtKB-SubCell"/>
</dbReference>
<dbReference type="GO" id="GO:0016829">
    <property type="term" value="F:lyase activity"/>
    <property type="evidence" value="ECO:0007669"/>
    <property type="project" value="UniProtKB-KW"/>
</dbReference>
<dbReference type="GO" id="GO:0003723">
    <property type="term" value="F:RNA binding"/>
    <property type="evidence" value="ECO:0007669"/>
    <property type="project" value="InterPro"/>
</dbReference>
<dbReference type="GO" id="GO:0004521">
    <property type="term" value="F:RNA endonuclease activity"/>
    <property type="evidence" value="ECO:0000314"/>
    <property type="project" value="UniProtKB"/>
</dbReference>
<dbReference type="GO" id="GO:0033902">
    <property type="term" value="F:rRNA endonuclease activity"/>
    <property type="evidence" value="ECO:0007669"/>
    <property type="project" value="UniProtKB-EC"/>
</dbReference>
<dbReference type="GO" id="GO:2000766">
    <property type="term" value="P:negative regulation of cytoplasmic translation"/>
    <property type="evidence" value="ECO:0000314"/>
    <property type="project" value="UniProtKB"/>
</dbReference>
<dbReference type="CDD" id="cd00606">
    <property type="entry name" value="fungal_RNase"/>
    <property type="match status" value="1"/>
</dbReference>
<dbReference type="Gene3D" id="3.10.450.30">
    <property type="entry name" value="Microbial ribonucleases"/>
    <property type="match status" value="1"/>
</dbReference>
<dbReference type="InterPro" id="IPR004025">
    <property type="entry name" value="Fun_ribotoxin"/>
</dbReference>
<dbReference type="InterPro" id="IPR000026">
    <property type="entry name" value="N1-like"/>
</dbReference>
<dbReference type="InterPro" id="IPR016191">
    <property type="entry name" value="Ribonuclease/ribotoxin"/>
</dbReference>
<dbReference type="InterPro" id="IPR048269">
    <property type="entry name" value="RNase_U2"/>
</dbReference>
<dbReference type="Pfam" id="PF00545">
    <property type="entry name" value="Ribonuclease"/>
    <property type="match status" value="1"/>
</dbReference>
<dbReference type="PIRSF" id="PIRSF037430">
    <property type="entry name" value="RNase_U2"/>
    <property type="match status" value="1"/>
</dbReference>
<dbReference type="PRINTS" id="PR01704">
    <property type="entry name" value="FUNRIBOTOXIN"/>
</dbReference>
<dbReference type="SUPFAM" id="SSF53933">
    <property type="entry name" value="Microbial ribonucleases"/>
    <property type="match status" value="1"/>
</dbReference>
<organism>
    <name type="scientific">Aspergillus giganteus</name>
    <dbReference type="NCBI Taxonomy" id="5060"/>
    <lineage>
        <taxon>Eukaryota</taxon>
        <taxon>Fungi</taxon>
        <taxon>Dikarya</taxon>
        <taxon>Ascomycota</taxon>
        <taxon>Pezizomycotina</taxon>
        <taxon>Eurotiomycetes</taxon>
        <taxon>Eurotiomycetidae</taxon>
        <taxon>Eurotiales</taxon>
        <taxon>Aspergillaceae</taxon>
        <taxon>Aspergillus</taxon>
        <taxon>Aspergillus subgen. Fumigati</taxon>
    </lineage>
</organism>
<gene>
    <name type="primary">sar</name>
</gene>
<comment type="function">
    <text evidence="1 3">Alpha-sarcin is specific for purines in both single- and double-stranded RNA. Its toxic action on eukaryotic cells is the result of cleavage of a single phosphodiester bond in the 60S subunit of ribosomes (By similarity). Inhibits both the EFl (elongation factor 1)-dependent binding of aminoacyl-tRNA and the GTP-dependent binding of EF2 (elongation factor 2) to ribosomes (PubMed:2930482).</text>
</comment>
<comment type="catalytic activity">
    <reaction evidence="5">
        <text>a 28S rRNA containing guanosine-adenosine pair + H2O = an [RNA fragment]-3'-adenosine-3'-phosphate + a 5'-a hydroxy-guanosine-3'-[RNA fragment].</text>
        <dbReference type="EC" id="4.6.1.23"/>
    </reaction>
</comment>
<comment type="subcellular location">
    <subcellularLocation>
        <location>Secreted</location>
    </subcellularLocation>
</comment>
<comment type="similarity">
    <text evidence="5">Belongs to the ribonuclease U2 family.</text>
</comment>
<evidence type="ECO:0000250" key="1">
    <source>
        <dbReference type="UniProtKB" id="P0CL70"/>
    </source>
</evidence>
<evidence type="ECO:0000256" key="2">
    <source>
        <dbReference type="SAM" id="MobiDB-lite"/>
    </source>
</evidence>
<evidence type="ECO:0000269" key="3">
    <source>
    </source>
</evidence>
<evidence type="ECO:0000269" key="4">
    <source>
    </source>
</evidence>
<evidence type="ECO:0000305" key="5"/>
<evidence type="ECO:0007829" key="6">
    <source>
        <dbReference type="PDB" id="1DE3"/>
    </source>
</evidence>
<evidence type="ECO:0007829" key="7">
    <source>
        <dbReference type="PDB" id="1R4Y"/>
    </source>
</evidence>